<feature type="chain" id="PRO_0000160720" description="Alcohol dehydrogenase 2">
    <location>
        <begin position="1"/>
        <end position="367"/>
    </location>
</feature>
<feature type="binding site" evidence="1">
    <location>
        <position position="48"/>
    </location>
    <ligand>
        <name>Zn(2+)</name>
        <dbReference type="ChEBI" id="CHEBI:29105"/>
        <label>1</label>
        <note>catalytic</note>
    </ligand>
</feature>
<feature type="binding site" evidence="1">
    <location>
        <position position="74"/>
    </location>
    <ligand>
        <name>Zn(2+)</name>
        <dbReference type="ChEBI" id="CHEBI:29105"/>
        <label>1</label>
        <note>catalytic</note>
    </ligand>
</feature>
<feature type="binding site" evidence="1">
    <location>
        <position position="107"/>
    </location>
    <ligand>
        <name>Zn(2+)</name>
        <dbReference type="ChEBI" id="CHEBI:29105"/>
        <label>2</label>
    </ligand>
</feature>
<feature type="binding site" evidence="1">
    <location>
        <position position="110"/>
    </location>
    <ligand>
        <name>Zn(2+)</name>
        <dbReference type="ChEBI" id="CHEBI:29105"/>
        <label>2</label>
    </ligand>
</feature>
<feature type="binding site" evidence="1">
    <location>
        <position position="113"/>
    </location>
    <ligand>
        <name>Zn(2+)</name>
        <dbReference type="ChEBI" id="CHEBI:29105"/>
        <label>2</label>
    </ligand>
</feature>
<feature type="binding site" evidence="1">
    <location>
        <position position="121"/>
    </location>
    <ligand>
        <name>Zn(2+)</name>
        <dbReference type="ChEBI" id="CHEBI:29105"/>
        <label>2</label>
    </ligand>
</feature>
<feature type="binding site" evidence="1">
    <location>
        <position position="163"/>
    </location>
    <ligand>
        <name>Zn(2+)</name>
        <dbReference type="ChEBI" id="CHEBI:29105"/>
        <label>1</label>
        <note>catalytic</note>
    </ligand>
</feature>
<feature type="binding site" evidence="1">
    <location>
        <begin position="187"/>
        <end position="193"/>
    </location>
    <ligand>
        <name>NAD(+)</name>
        <dbReference type="ChEBI" id="CHEBI:57540"/>
    </ligand>
</feature>
<feature type="binding site" evidence="1">
    <location>
        <position position="212"/>
    </location>
    <ligand>
        <name>NAD(+)</name>
        <dbReference type="ChEBI" id="CHEBI:57540"/>
    </ligand>
</feature>
<feature type="binding site" evidence="1">
    <location>
        <position position="216"/>
    </location>
    <ligand>
        <name>NAD(+)</name>
        <dbReference type="ChEBI" id="CHEBI:57540"/>
    </ligand>
</feature>
<feature type="binding site" evidence="1">
    <location>
        <begin position="286"/>
        <end position="288"/>
    </location>
    <ligand>
        <name>NAD(+)</name>
        <dbReference type="ChEBI" id="CHEBI:57540"/>
    </ligand>
</feature>
<feature type="binding site" evidence="1">
    <location>
        <position position="361"/>
    </location>
    <ligand>
        <name>NAD(+)</name>
        <dbReference type="ChEBI" id="CHEBI:57540"/>
    </ligand>
</feature>
<feature type="sequence conflict" description="In Ref. 1; CAA88034." evidence="3" ref="1">
    <original>A</original>
    <variation>R</variation>
    <location>
        <position position="295"/>
    </location>
</feature>
<accession>P54202</accession>
<accession>C8V7A8</accession>
<accession>Q5B6T9</accession>
<keyword id="KW-0963">Cytoplasm</keyword>
<keyword id="KW-0479">Metal-binding</keyword>
<keyword id="KW-0520">NAD</keyword>
<keyword id="KW-0560">Oxidoreductase</keyword>
<keyword id="KW-1185">Reference proteome</keyword>
<keyword id="KW-0862">Zinc</keyword>
<organism>
    <name type="scientific">Emericella nidulans (strain FGSC A4 / ATCC 38163 / CBS 112.46 / NRRL 194 / M139)</name>
    <name type="common">Aspergillus nidulans</name>
    <dbReference type="NCBI Taxonomy" id="227321"/>
    <lineage>
        <taxon>Eukaryota</taxon>
        <taxon>Fungi</taxon>
        <taxon>Dikarya</taxon>
        <taxon>Ascomycota</taxon>
        <taxon>Pezizomycotina</taxon>
        <taxon>Eurotiomycetes</taxon>
        <taxon>Eurotiomycetidae</taxon>
        <taxon>Eurotiales</taxon>
        <taxon>Aspergillaceae</taxon>
        <taxon>Aspergillus</taxon>
        <taxon>Aspergillus subgen. Nidulantes</taxon>
    </lineage>
</organism>
<evidence type="ECO:0000250" key="1"/>
<evidence type="ECO:0000269" key="2">
    <source>
    </source>
</evidence>
<evidence type="ECO:0000305" key="3"/>
<proteinExistence type="evidence at protein level"/>
<protein>
    <recommendedName>
        <fullName>Alcohol dehydrogenase 2</fullName>
        <ecNumber evidence="2">1.1.1.1</ecNumber>
    </recommendedName>
    <alternativeName>
        <fullName>Alcohol dehydrogenase II</fullName>
        <shortName>ADH II</shortName>
    </alternativeName>
</protein>
<name>ADH2_EMENI</name>
<dbReference type="EC" id="1.1.1.1" evidence="2"/>
<dbReference type="EMBL" id="Z48000">
    <property type="protein sequence ID" value="CAA88034.1"/>
    <property type="molecule type" value="Genomic_DNA"/>
</dbReference>
<dbReference type="EMBL" id="AACD01000061">
    <property type="protein sequence ID" value="EAA59949.1"/>
    <property type="molecule type" value="Genomic_DNA"/>
</dbReference>
<dbReference type="EMBL" id="BN001302">
    <property type="protein sequence ID" value="CBF75491.1"/>
    <property type="molecule type" value="Genomic_DNA"/>
</dbReference>
<dbReference type="PIR" id="S62746">
    <property type="entry name" value="S62746"/>
</dbReference>
<dbReference type="RefSeq" id="XP_661345.1">
    <property type="nucleotide sequence ID" value="XM_656253.1"/>
</dbReference>
<dbReference type="SMR" id="P54202"/>
<dbReference type="STRING" id="227321.P54202"/>
<dbReference type="EnsemblFungi" id="CBF75491">
    <property type="protein sequence ID" value="CBF75491"/>
    <property type="gene ID" value="ANIA_03741"/>
</dbReference>
<dbReference type="KEGG" id="ani:ANIA_03741"/>
<dbReference type="VEuPathDB" id="FungiDB:AN3741"/>
<dbReference type="eggNOG" id="KOG0023">
    <property type="taxonomic scope" value="Eukaryota"/>
</dbReference>
<dbReference type="HOGENOM" id="CLU_026673_20_1_1"/>
<dbReference type="InParanoid" id="P54202"/>
<dbReference type="OMA" id="QKISGYY"/>
<dbReference type="OrthoDB" id="1879366at2759"/>
<dbReference type="Proteomes" id="UP000000560">
    <property type="component" value="Chromosome II"/>
</dbReference>
<dbReference type="GO" id="GO:0005737">
    <property type="term" value="C:cytoplasm"/>
    <property type="evidence" value="ECO:0000318"/>
    <property type="project" value="GO_Central"/>
</dbReference>
<dbReference type="GO" id="GO:0004022">
    <property type="term" value="F:alcohol dehydrogenase (NAD+) activity"/>
    <property type="evidence" value="ECO:0000314"/>
    <property type="project" value="AspGD"/>
</dbReference>
<dbReference type="GO" id="GO:0008270">
    <property type="term" value="F:zinc ion binding"/>
    <property type="evidence" value="ECO:0007669"/>
    <property type="project" value="InterPro"/>
</dbReference>
<dbReference type="GO" id="GO:0006066">
    <property type="term" value="P:alcohol metabolic process"/>
    <property type="evidence" value="ECO:0000314"/>
    <property type="project" value="AspGD"/>
</dbReference>
<dbReference type="CDD" id="cd08297">
    <property type="entry name" value="CAD3"/>
    <property type="match status" value="1"/>
</dbReference>
<dbReference type="FunFam" id="3.40.50.720:FF:000039">
    <property type="entry name" value="Alcohol dehydrogenase AdhP"/>
    <property type="match status" value="1"/>
</dbReference>
<dbReference type="Gene3D" id="3.90.180.10">
    <property type="entry name" value="Medium-chain alcohol dehydrogenases, catalytic domain"/>
    <property type="match status" value="1"/>
</dbReference>
<dbReference type="Gene3D" id="3.40.50.720">
    <property type="entry name" value="NAD(P)-binding Rossmann-like Domain"/>
    <property type="match status" value="1"/>
</dbReference>
<dbReference type="InterPro" id="IPR013149">
    <property type="entry name" value="ADH-like_C"/>
</dbReference>
<dbReference type="InterPro" id="IPR013154">
    <property type="entry name" value="ADH-like_N"/>
</dbReference>
<dbReference type="InterPro" id="IPR002328">
    <property type="entry name" value="ADH_Zn_CS"/>
</dbReference>
<dbReference type="InterPro" id="IPR011032">
    <property type="entry name" value="GroES-like_sf"/>
</dbReference>
<dbReference type="InterPro" id="IPR036291">
    <property type="entry name" value="NAD(P)-bd_dom_sf"/>
</dbReference>
<dbReference type="InterPro" id="IPR020843">
    <property type="entry name" value="PKS_ER"/>
</dbReference>
<dbReference type="PANTHER" id="PTHR42940">
    <property type="entry name" value="ALCOHOL DEHYDROGENASE 1-RELATED"/>
    <property type="match status" value="1"/>
</dbReference>
<dbReference type="PANTHER" id="PTHR42940:SF5">
    <property type="entry name" value="ALCOHOL DEHYDROGENASE 2"/>
    <property type="match status" value="1"/>
</dbReference>
<dbReference type="Pfam" id="PF08240">
    <property type="entry name" value="ADH_N"/>
    <property type="match status" value="1"/>
</dbReference>
<dbReference type="Pfam" id="PF00107">
    <property type="entry name" value="ADH_zinc_N"/>
    <property type="match status" value="1"/>
</dbReference>
<dbReference type="SMART" id="SM00829">
    <property type="entry name" value="PKS_ER"/>
    <property type="match status" value="1"/>
</dbReference>
<dbReference type="SUPFAM" id="SSF50129">
    <property type="entry name" value="GroES-like"/>
    <property type="match status" value="1"/>
</dbReference>
<dbReference type="SUPFAM" id="SSF51735">
    <property type="entry name" value="NAD(P)-binding Rossmann-fold domains"/>
    <property type="match status" value="1"/>
</dbReference>
<dbReference type="PROSITE" id="PS00059">
    <property type="entry name" value="ADH_ZINC"/>
    <property type="match status" value="1"/>
</dbReference>
<reference key="1">
    <citation type="journal article" date="1996" name="Curr. Genet.">
        <title>The cloning and sequencing of the alcB gene, coding for alcohol dehydrogenase II, in Aspergillus nidulans.</title>
        <authorList>
            <person name="Hunter G.D."/>
            <person name="Jones I.G."/>
            <person name="Sealy-Lewis H.M."/>
        </authorList>
    </citation>
    <scope>NUCLEOTIDE SEQUENCE [GENOMIC DNA]</scope>
    <scope>CATALYTIC ACTIVITY</scope>
</reference>
<reference key="2">
    <citation type="journal article" date="2005" name="Nature">
        <title>Sequencing of Aspergillus nidulans and comparative analysis with A. fumigatus and A. oryzae.</title>
        <authorList>
            <person name="Galagan J.E."/>
            <person name="Calvo S.E."/>
            <person name="Cuomo C."/>
            <person name="Ma L.-J."/>
            <person name="Wortman J.R."/>
            <person name="Batzoglou S."/>
            <person name="Lee S.-I."/>
            <person name="Bastuerkmen M."/>
            <person name="Spevak C.C."/>
            <person name="Clutterbuck J."/>
            <person name="Kapitonov V."/>
            <person name="Jurka J."/>
            <person name="Scazzocchio C."/>
            <person name="Farman M.L."/>
            <person name="Butler J."/>
            <person name="Purcell S."/>
            <person name="Harris S."/>
            <person name="Braus G.H."/>
            <person name="Draht O."/>
            <person name="Busch S."/>
            <person name="D'Enfert C."/>
            <person name="Bouchier C."/>
            <person name="Goldman G.H."/>
            <person name="Bell-Pedersen D."/>
            <person name="Griffiths-Jones S."/>
            <person name="Doonan J.H."/>
            <person name="Yu J."/>
            <person name="Vienken K."/>
            <person name="Pain A."/>
            <person name="Freitag M."/>
            <person name="Selker E.U."/>
            <person name="Archer D.B."/>
            <person name="Penalva M.A."/>
            <person name="Oakley B.R."/>
            <person name="Momany M."/>
            <person name="Tanaka T."/>
            <person name="Kumagai T."/>
            <person name="Asai K."/>
            <person name="Machida M."/>
            <person name="Nierman W.C."/>
            <person name="Denning D.W."/>
            <person name="Caddick M.X."/>
            <person name="Hynes M."/>
            <person name="Paoletti M."/>
            <person name="Fischer R."/>
            <person name="Miller B.L."/>
            <person name="Dyer P.S."/>
            <person name="Sachs M.S."/>
            <person name="Osmani S.A."/>
            <person name="Birren B.W."/>
        </authorList>
    </citation>
    <scope>NUCLEOTIDE SEQUENCE [LARGE SCALE GENOMIC DNA]</scope>
    <source>
        <strain>FGSC A4 / ATCC 38163 / CBS 112.46 / NRRL 194 / M139</strain>
    </source>
</reference>
<reference key="3">
    <citation type="journal article" date="2009" name="Fungal Genet. Biol.">
        <title>The 2008 update of the Aspergillus nidulans genome annotation: a community effort.</title>
        <authorList>
            <person name="Wortman J.R."/>
            <person name="Gilsenan J.M."/>
            <person name="Joardar V."/>
            <person name="Deegan J."/>
            <person name="Clutterbuck J."/>
            <person name="Andersen M.R."/>
            <person name="Archer D."/>
            <person name="Bencina M."/>
            <person name="Braus G."/>
            <person name="Coutinho P."/>
            <person name="von Dohren H."/>
            <person name="Doonan J."/>
            <person name="Driessen A.J."/>
            <person name="Durek P."/>
            <person name="Espeso E."/>
            <person name="Fekete E."/>
            <person name="Flipphi M."/>
            <person name="Estrada C.G."/>
            <person name="Geysens S."/>
            <person name="Goldman G."/>
            <person name="de Groot P.W."/>
            <person name="Hansen K."/>
            <person name="Harris S.D."/>
            <person name="Heinekamp T."/>
            <person name="Helmstaedt K."/>
            <person name="Henrissat B."/>
            <person name="Hofmann G."/>
            <person name="Homan T."/>
            <person name="Horio T."/>
            <person name="Horiuchi H."/>
            <person name="James S."/>
            <person name="Jones M."/>
            <person name="Karaffa L."/>
            <person name="Karanyi Z."/>
            <person name="Kato M."/>
            <person name="Keller N."/>
            <person name="Kelly D.E."/>
            <person name="Kiel J.A."/>
            <person name="Kim J.M."/>
            <person name="van der Klei I.J."/>
            <person name="Klis F.M."/>
            <person name="Kovalchuk A."/>
            <person name="Krasevec N."/>
            <person name="Kubicek C.P."/>
            <person name="Liu B."/>
            <person name="Maccabe A."/>
            <person name="Meyer V."/>
            <person name="Mirabito P."/>
            <person name="Miskei M."/>
            <person name="Mos M."/>
            <person name="Mullins J."/>
            <person name="Nelson D.R."/>
            <person name="Nielsen J."/>
            <person name="Oakley B.R."/>
            <person name="Osmani S.A."/>
            <person name="Pakula T."/>
            <person name="Paszewski A."/>
            <person name="Paulsen I."/>
            <person name="Pilsyk S."/>
            <person name="Pocsi I."/>
            <person name="Punt P.J."/>
            <person name="Ram A.F."/>
            <person name="Ren Q."/>
            <person name="Robellet X."/>
            <person name="Robson G."/>
            <person name="Seiboth B."/>
            <person name="van Solingen P."/>
            <person name="Specht T."/>
            <person name="Sun J."/>
            <person name="Taheri-Talesh N."/>
            <person name="Takeshita N."/>
            <person name="Ussery D."/>
            <person name="vanKuyk P.A."/>
            <person name="Visser H."/>
            <person name="van de Vondervoort P.J."/>
            <person name="de Vries R.P."/>
            <person name="Walton J."/>
            <person name="Xiang X."/>
            <person name="Xiong Y."/>
            <person name="Zeng A.P."/>
            <person name="Brandt B.W."/>
            <person name="Cornell M.J."/>
            <person name="van den Hondel C.A."/>
            <person name="Visser J."/>
            <person name="Oliver S.G."/>
            <person name="Turner G."/>
        </authorList>
    </citation>
    <scope>GENOME REANNOTATION</scope>
    <source>
        <strain>FGSC A4 / ATCC 38163 / CBS 112.46 / NRRL 194 / M139</strain>
    </source>
</reference>
<gene>
    <name type="primary">alcB</name>
    <name type="ORF">AN3741</name>
</gene>
<sequence>MAAPEIPKKQKAVIYDNPGTVSTKVVELDVPEPGDNEVLINLTHSGVCHSDFGIMTNTWKILPFPTQPGQVGGHEGVGKVVKLGAGAEASGLKIGDRVGVKWISSACGQCPPCQDGADGLCFNQKVSGYYTPGTFQQYVLGPAQYVTPIPDGLPSAEAAPLLCAGVTVYASLKRSKAQPGQWIVISGAGGGLGHLAVQIAAKGMGLRVIGVDHGSKEELVKASGAEHFVDITKFPTGDKFEAISSHVKSLTTKGLGAHAVIVCTASNIAYAQSLLFLRYNGTMVCVGIPENEPQAIASAYPGLFIQKHVHVTGSAVGNRNEAIETMEFAARGVIKAHFREEKMEALTEIFKEMEEGKLQGRVVLDLS</sequence>
<comment type="catalytic activity">
    <reaction evidence="2">
        <text>a primary alcohol + NAD(+) = an aldehyde + NADH + H(+)</text>
        <dbReference type="Rhea" id="RHEA:10736"/>
        <dbReference type="ChEBI" id="CHEBI:15378"/>
        <dbReference type="ChEBI" id="CHEBI:15734"/>
        <dbReference type="ChEBI" id="CHEBI:17478"/>
        <dbReference type="ChEBI" id="CHEBI:57540"/>
        <dbReference type="ChEBI" id="CHEBI:57945"/>
        <dbReference type="EC" id="1.1.1.1"/>
    </reaction>
</comment>
<comment type="catalytic activity">
    <reaction evidence="2">
        <text>a secondary alcohol + NAD(+) = a ketone + NADH + H(+)</text>
        <dbReference type="Rhea" id="RHEA:10740"/>
        <dbReference type="ChEBI" id="CHEBI:15378"/>
        <dbReference type="ChEBI" id="CHEBI:17087"/>
        <dbReference type="ChEBI" id="CHEBI:35681"/>
        <dbReference type="ChEBI" id="CHEBI:57540"/>
        <dbReference type="ChEBI" id="CHEBI:57945"/>
        <dbReference type="EC" id="1.1.1.1"/>
    </reaction>
</comment>
<comment type="cofactor">
    <cofactor evidence="1">
        <name>Zn(2+)</name>
        <dbReference type="ChEBI" id="CHEBI:29105"/>
    </cofactor>
    <text evidence="1">Binds 2 Zn(2+) ions per subunit.</text>
</comment>
<comment type="subunit">
    <text evidence="1">Homotetramer.</text>
</comment>
<comment type="subcellular location">
    <subcellularLocation>
        <location evidence="1">Cytoplasm</location>
    </subcellularLocation>
</comment>
<comment type="similarity">
    <text evidence="3">Belongs to the zinc-containing alcohol dehydrogenase family.</text>
</comment>